<keyword id="KW-0687">Ribonucleoprotein</keyword>
<keyword id="KW-0689">Ribosomal protein</keyword>
<keyword id="KW-0694">RNA-binding</keyword>
<keyword id="KW-0699">rRNA-binding</keyword>
<reference key="1">
    <citation type="submission" date="2007-10" db="EMBL/GenBank/DDBJ databases">
        <title>Genome sequence of Campylobacter concisus 13826 isolated from human feces.</title>
        <authorList>
            <person name="Fouts D.E."/>
            <person name="Mongodin E.F."/>
            <person name="Puiu D."/>
            <person name="Sebastian Y."/>
            <person name="Miller W.G."/>
            <person name="Mandrell R.E."/>
            <person name="On S."/>
            <person name="Nelson K.E."/>
        </authorList>
    </citation>
    <scope>NUCLEOTIDE SEQUENCE [LARGE SCALE GENOMIC DNA]</scope>
    <source>
        <strain>13826</strain>
    </source>
</reference>
<evidence type="ECO:0000255" key="1">
    <source>
        <dbReference type="HAMAP-Rule" id="MF_01309"/>
    </source>
</evidence>
<evidence type="ECO:0000256" key="2">
    <source>
        <dbReference type="SAM" id="MobiDB-lite"/>
    </source>
</evidence>
<evidence type="ECO:0000305" key="3"/>
<sequence>MGQKVNPIGLRLGINRNWESRWFPTKQSLPENIGEDYKIRAFLKKKLYYAGISQILIERTAKKLRVTVVAARPGIIIGKKGQDVENLKNEVSKLIGKEVNVNIKEERKAQASAQLAAENVAMQLEKRVAFRRAMKKVIQGAQKSGAKGIKISVAGRLGGAEMARTEWYLEGRVPLHTLRAKIDYGVAEAHTTYGNIGIKVWIFKGEVLQKGVQPEKTEEEAPKKTRRARRGK</sequence>
<proteinExistence type="inferred from homology"/>
<accession>A7ZG06</accession>
<dbReference type="EMBL" id="CP000792">
    <property type="protein sequence ID" value="EAT98159.2"/>
    <property type="molecule type" value="Genomic_DNA"/>
</dbReference>
<dbReference type="RefSeq" id="WP_002941650.1">
    <property type="nucleotide sequence ID" value="NC_009802.2"/>
</dbReference>
<dbReference type="SMR" id="A7ZG06"/>
<dbReference type="STRING" id="360104.CCC13826_1771"/>
<dbReference type="GeneID" id="28663429"/>
<dbReference type="KEGG" id="cco:CCC13826_1771"/>
<dbReference type="eggNOG" id="COG0092">
    <property type="taxonomic scope" value="Bacteria"/>
</dbReference>
<dbReference type="HOGENOM" id="CLU_058591_0_2_7"/>
<dbReference type="OrthoDB" id="9806396at2"/>
<dbReference type="Proteomes" id="UP000001121">
    <property type="component" value="Chromosome"/>
</dbReference>
<dbReference type="GO" id="GO:0022627">
    <property type="term" value="C:cytosolic small ribosomal subunit"/>
    <property type="evidence" value="ECO:0007669"/>
    <property type="project" value="TreeGrafter"/>
</dbReference>
<dbReference type="GO" id="GO:0003729">
    <property type="term" value="F:mRNA binding"/>
    <property type="evidence" value="ECO:0007669"/>
    <property type="project" value="UniProtKB-UniRule"/>
</dbReference>
<dbReference type="GO" id="GO:0019843">
    <property type="term" value="F:rRNA binding"/>
    <property type="evidence" value="ECO:0007669"/>
    <property type="project" value="UniProtKB-UniRule"/>
</dbReference>
<dbReference type="GO" id="GO:0003735">
    <property type="term" value="F:structural constituent of ribosome"/>
    <property type="evidence" value="ECO:0007669"/>
    <property type="project" value="InterPro"/>
</dbReference>
<dbReference type="GO" id="GO:0006412">
    <property type="term" value="P:translation"/>
    <property type="evidence" value="ECO:0007669"/>
    <property type="project" value="UniProtKB-UniRule"/>
</dbReference>
<dbReference type="CDD" id="cd02412">
    <property type="entry name" value="KH-II_30S_S3"/>
    <property type="match status" value="1"/>
</dbReference>
<dbReference type="FunFam" id="3.30.1140.32:FF:000006">
    <property type="entry name" value="30S ribosomal protein S3"/>
    <property type="match status" value="1"/>
</dbReference>
<dbReference type="FunFam" id="3.30.300.20:FF:000001">
    <property type="entry name" value="30S ribosomal protein S3"/>
    <property type="match status" value="1"/>
</dbReference>
<dbReference type="Gene3D" id="3.30.300.20">
    <property type="match status" value="1"/>
</dbReference>
<dbReference type="Gene3D" id="3.30.1140.32">
    <property type="entry name" value="Ribosomal protein S3, C-terminal domain"/>
    <property type="match status" value="1"/>
</dbReference>
<dbReference type="HAMAP" id="MF_01309_B">
    <property type="entry name" value="Ribosomal_uS3_B"/>
    <property type="match status" value="1"/>
</dbReference>
<dbReference type="InterPro" id="IPR004087">
    <property type="entry name" value="KH_dom"/>
</dbReference>
<dbReference type="InterPro" id="IPR015946">
    <property type="entry name" value="KH_dom-like_a/b"/>
</dbReference>
<dbReference type="InterPro" id="IPR004044">
    <property type="entry name" value="KH_dom_type_2"/>
</dbReference>
<dbReference type="InterPro" id="IPR009019">
    <property type="entry name" value="KH_sf_prok-type"/>
</dbReference>
<dbReference type="InterPro" id="IPR036419">
    <property type="entry name" value="Ribosomal_S3_C_sf"/>
</dbReference>
<dbReference type="InterPro" id="IPR005704">
    <property type="entry name" value="Ribosomal_uS3_bac-typ"/>
</dbReference>
<dbReference type="InterPro" id="IPR001351">
    <property type="entry name" value="Ribosomal_uS3_C"/>
</dbReference>
<dbReference type="InterPro" id="IPR018280">
    <property type="entry name" value="Ribosomal_uS3_CS"/>
</dbReference>
<dbReference type="NCBIfam" id="TIGR01009">
    <property type="entry name" value="rpsC_bact"/>
    <property type="match status" value="1"/>
</dbReference>
<dbReference type="PANTHER" id="PTHR11760">
    <property type="entry name" value="30S/40S RIBOSOMAL PROTEIN S3"/>
    <property type="match status" value="1"/>
</dbReference>
<dbReference type="PANTHER" id="PTHR11760:SF19">
    <property type="entry name" value="SMALL RIBOSOMAL SUBUNIT PROTEIN US3C"/>
    <property type="match status" value="1"/>
</dbReference>
<dbReference type="Pfam" id="PF07650">
    <property type="entry name" value="KH_2"/>
    <property type="match status" value="1"/>
</dbReference>
<dbReference type="Pfam" id="PF00189">
    <property type="entry name" value="Ribosomal_S3_C"/>
    <property type="match status" value="1"/>
</dbReference>
<dbReference type="SMART" id="SM00322">
    <property type="entry name" value="KH"/>
    <property type="match status" value="1"/>
</dbReference>
<dbReference type="SUPFAM" id="SSF54814">
    <property type="entry name" value="Prokaryotic type KH domain (KH-domain type II)"/>
    <property type="match status" value="1"/>
</dbReference>
<dbReference type="SUPFAM" id="SSF54821">
    <property type="entry name" value="Ribosomal protein S3 C-terminal domain"/>
    <property type="match status" value="1"/>
</dbReference>
<dbReference type="PROSITE" id="PS50823">
    <property type="entry name" value="KH_TYPE_2"/>
    <property type="match status" value="1"/>
</dbReference>
<dbReference type="PROSITE" id="PS00548">
    <property type="entry name" value="RIBOSOMAL_S3"/>
    <property type="match status" value="1"/>
</dbReference>
<protein>
    <recommendedName>
        <fullName evidence="1">Small ribosomal subunit protein uS3</fullName>
    </recommendedName>
    <alternativeName>
        <fullName evidence="3">30S ribosomal protein S3</fullName>
    </alternativeName>
</protein>
<comment type="function">
    <text evidence="1">Binds the lower part of the 30S subunit head. Binds mRNA in the 70S ribosome, positioning it for translation.</text>
</comment>
<comment type="subunit">
    <text evidence="1">Part of the 30S ribosomal subunit. Forms a tight complex with proteins S10 and S14.</text>
</comment>
<comment type="similarity">
    <text evidence="1">Belongs to the universal ribosomal protein uS3 family.</text>
</comment>
<name>RS3_CAMC1</name>
<organism>
    <name type="scientific">Campylobacter concisus (strain 13826)</name>
    <dbReference type="NCBI Taxonomy" id="360104"/>
    <lineage>
        <taxon>Bacteria</taxon>
        <taxon>Pseudomonadati</taxon>
        <taxon>Campylobacterota</taxon>
        <taxon>Epsilonproteobacteria</taxon>
        <taxon>Campylobacterales</taxon>
        <taxon>Campylobacteraceae</taxon>
        <taxon>Campylobacter</taxon>
    </lineage>
</organism>
<gene>
    <name evidence="1" type="primary">rpsC</name>
    <name type="ordered locus">Ccon26_18790</name>
    <name type="ORF">CCC13826_1771</name>
</gene>
<feature type="chain" id="PRO_0000323289" description="Small ribosomal subunit protein uS3">
    <location>
        <begin position="1"/>
        <end position="232"/>
    </location>
</feature>
<feature type="domain" description="KH type-2" evidence="1">
    <location>
        <begin position="39"/>
        <end position="107"/>
    </location>
</feature>
<feature type="region of interest" description="Disordered" evidence="2">
    <location>
        <begin position="211"/>
        <end position="232"/>
    </location>
</feature>
<feature type="compositionally biased region" description="Basic and acidic residues" evidence="2">
    <location>
        <begin position="213"/>
        <end position="223"/>
    </location>
</feature>